<name>ACP_XYLF2</name>
<keyword id="KW-0963">Cytoplasm</keyword>
<keyword id="KW-0275">Fatty acid biosynthesis</keyword>
<keyword id="KW-0276">Fatty acid metabolism</keyword>
<keyword id="KW-0444">Lipid biosynthesis</keyword>
<keyword id="KW-0443">Lipid metabolism</keyword>
<keyword id="KW-0596">Phosphopantetheine</keyword>
<keyword id="KW-0597">Phosphoprotein</keyword>
<organism>
    <name type="scientific">Xylella fastidiosa (strain M23)</name>
    <dbReference type="NCBI Taxonomy" id="405441"/>
    <lineage>
        <taxon>Bacteria</taxon>
        <taxon>Pseudomonadati</taxon>
        <taxon>Pseudomonadota</taxon>
        <taxon>Gammaproteobacteria</taxon>
        <taxon>Lysobacterales</taxon>
        <taxon>Lysobacteraceae</taxon>
        <taxon>Xylella</taxon>
    </lineage>
</organism>
<protein>
    <recommendedName>
        <fullName evidence="1">Acyl carrier protein</fullName>
        <shortName evidence="1">ACP</shortName>
    </recommendedName>
</protein>
<gene>
    <name evidence="1" type="primary">acpP</name>
    <name type="ordered locus">XfasM23_1587</name>
</gene>
<evidence type="ECO:0000255" key="1">
    <source>
        <dbReference type="HAMAP-Rule" id="MF_01217"/>
    </source>
</evidence>
<evidence type="ECO:0000255" key="2">
    <source>
        <dbReference type="PROSITE-ProRule" id="PRU00258"/>
    </source>
</evidence>
<comment type="function">
    <text evidence="1">Carrier of the growing fatty acid chain in fatty acid biosynthesis.</text>
</comment>
<comment type="pathway">
    <text evidence="1">Lipid metabolism; fatty acid biosynthesis.</text>
</comment>
<comment type="subcellular location">
    <subcellularLocation>
        <location evidence="1">Cytoplasm</location>
    </subcellularLocation>
</comment>
<comment type="PTM">
    <text evidence="1">4'-phosphopantetheine is transferred from CoA to a specific serine of apo-ACP by AcpS. This modification is essential for activity because fatty acids are bound in thioester linkage to the sulfhydryl of the prosthetic group.</text>
</comment>
<comment type="similarity">
    <text evidence="1">Belongs to the acyl carrier protein (ACP) family.</text>
</comment>
<sequence>MSDIEARVRKIVAEKLNVDEEKVTNTSTFVDELGADSLDTVELVMALEDEFQCEIGDEAAEKMTSVQHAIDYIKSNAKC</sequence>
<dbReference type="EMBL" id="CP001011">
    <property type="protein sequence ID" value="ACB92995.1"/>
    <property type="molecule type" value="Genomic_DNA"/>
</dbReference>
<dbReference type="RefSeq" id="WP_004083472.1">
    <property type="nucleotide sequence ID" value="NC_010577.1"/>
</dbReference>
<dbReference type="SMR" id="B2I798"/>
<dbReference type="GeneID" id="93905324"/>
<dbReference type="KEGG" id="xfn:XfasM23_1587"/>
<dbReference type="HOGENOM" id="CLU_108696_5_1_6"/>
<dbReference type="UniPathway" id="UPA00094"/>
<dbReference type="Proteomes" id="UP000001698">
    <property type="component" value="Chromosome"/>
</dbReference>
<dbReference type="GO" id="GO:0005829">
    <property type="term" value="C:cytosol"/>
    <property type="evidence" value="ECO:0007669"/>
    <property type="project" value="TreeGrafter"/>
</dbReference>
<dbReference type="GO" id="GO:0016020">
    <property type="term" value="C:membrane"/>
    <property type="evidence" value="ECO:0007669"/>
    <property type="project" value="GOC"/>
</dbReference>
<dbReference type="GO" id="GO:0000035">
    <property type="term" value="F:acyl binding"/>
    <property type="evidence" value="ECO:0007669"/>
    <property type="project" value="TreeGrafter"/>
</dbReference>
<dbReference type="GO" id="GO:0000036">
    <property type="term" value="F:acyl carrier activity"/>
    <property type="evidence" value="ECO:0007669"/>
    <property type="project" value="UniProtKB-UniRule"/>
</dbReference>
<dbReference type="GO" id="GO:0009245">
    <property type="term" value="P:lipid A biosynthetic process"/>
    <property type="evidence" value="ECO:0007669"/>
    <property type="project" value="TreeGrafter"/>
</dbReference>
<dbReference type="FunFam" id="1.10.1200.10:FF:000001">
    <property type="entry name" value="Acyl carrier protein"/>
    <property type="match status" value="1"/>
</dbReference>
<dbReference type="Gene3D" id="1.10.1200.10">
    <property type="entry name" value="ACP-like"/>
    <property type="match status" value="1"/>
</dbReference>
<dbReference type="HAMAP" id="MF_01217">
    <property type="entry name" value="Acyl_carrier"/>
    <property type="match status" value="1"/>
</dbReference>
<dbReference type="InterPro" id="IPR003231">
    <property type="entry name" value="ACP"/>
</dbReference>
<dbReference type="InterPro" id="IPR036736">
    <property type="entry name" value="ACP-like_sf"/>
</dbReference>
<dbReference type="InterPro" id="IPR009081">
    <property type="entry name" value="PP-bd_ACP"/>
</dbReference>
<dbReference type="InterPro" id="IPR006162">
    <property type="entry name" value="Ppantetheine_attach_site"/>
</dbReference>
<dbReference type="NCBIfam" id="TIGR00517">
    <property type="entry name" value="acyl_carrier"/>
    <property type="match status" value="1"/>
</dbReference>
<dbReference type="NCBIfam" id="NF002148">
    <property type="entry name" value="PRK00982.1-2"/>
    <property type="match status" value="1"/>
</dbReference>
<dbReference type="NCBIfam" id="NF002149">
    <property type="entry name" value="PRK00982.1-3"/>
    <property type="match status" value="1"/>
</dbReference>
<dbReference type="NCBIfam" id="NF002150">
    <property type="entry name" value="PRK00982.1-4"/>
    <property type="match status" value="1"/>
</dbReference>
<dbReference type="NCBIfam" id="NF002151">
    <property type="entry name" value="PRK00982.1-5"/>
    <property type="match status" value="1"/>
</dbReference>
<dbReference type="PANTHER" id="PTHR20863">
    <property type="entry name" value="ACYL CARRIER PROTEIN"/>
    <property type="match status" value="1"/>
</dbReference>
<dbReference type="PANTHER" id="PTHR20863:SF76">
    <property type="entry name" value="CARRIER DOMAIN-CONTAINING PROTEIN"/>
    <property type="match status" value="1"/>
</dbReference>
<dbReference type="Pfam" id="PF00550">
    <property type="entry name" value="PP-binding"/>
    <property type="match status" value="1"/>
</dbReference>
<dbReference type="SUPFAM" id="SSF47336">
    <property type="entry name" value="ACP-like"/>
    <property type="match status" value="1"/>
</dbReference>
<dbReference type="PROSITE" id="PS50075">
    <property type="entry name" value="CARRIER"/>
    <property type="match status" value="1"/>
</dbReference>
<dbReference type="PROSITE" id="PS00012">
    <property type="entry name" value="PHOSPHOPANTETHEINE"/>
    <property type="match status" value="1"/>
</dbReference>
<feature type="chain" id="PRO_1000139077" description="Acyl carrier protein">
    <location>
        <begin position="1"/>
        <end position="79"/>
    </location>
</feature>
<feature type="domain" description="Carrier" evidence="2">
    <location>
        <begin position="2"/>
        <end position="77"/>
    </location>
</feature>
<feature type="modified residue" description="O-(pantetheine 4'-phosphoryl)serine" evidence="2">
    <location>
        <position position="37"/>
    </location>
</feature>
<accession>B2I798</accession>
<reference key="1">
    <citation type="journal article" date="2010" name="J. Bacteriol.">
        <title>Whole genome sequences of two Xylella fastidiosa strains (M12 and M23) causing almond leaf scorch disease in California.</title>
        <authorList>
            <person name="Chen J."/>
            <person name="Xie G."/>
            <person name="Han S."/>
            <person name="Chertkov O."/>
            <person name="Sims D."/>
            <person name="Civerolo E.L."/>
        </authorList>
    </citation>
    <scope>NUCLEOTIDE SEQUENCE [LARGE SCALE GENOMIC DNA]</scope>
    <source>
        <strain>M23</strain>
    </source>
</reference>
<proteinExistence type="inferred from homology"/>